<comment type="function">
    <text>Destroys radicals which are normally produced within the cells and which are toxic to biological systems.</text>
</comment>
<comment type="catalytic activity">
    <reaction>
        <text>2 superoxide + 2 H(+) = H2O2 + O2</text>
        <dbReference type="Rhea" id="RHEA:20696"/>
        <dbReference type="ChEBI" id="CHEBI:15378"/>
        <dbReference type="ChEBI" id="CHEBI:15379"/>
        <dbReference type="ChEBI" id="CHEBI:16240"/>
        <dbReference type="ChEBI" id="CHEBI:18421"/>
        <dbReference type="EC" id="1.15.1.1"/>
    </reaction>
</comment>
<comment type="cofactor">
    <cofactor evidence="1">
        <name>Cu cation</name>
        <dbReference type="ChEBI" id="CHEBI:23378"/>
    </cofactor>
    <text evidence="1">Binds 1 copper ion per subunit.</text>
</comment>
<comment type="cofactor">
    <cofactor evidence="1">
        <name>Zn(2+)</name>
        <dbReference type="ChEBI" id="CHEBI:29105"/>
    </cofactor>
    <text evidence="1">Binds 1 zinc ion per subunit.</text>
</comment>
<comment type="subunit">
    <text>Homodimer.</text>
</comment>
<comment type="subcellular location">
    <subcellularLocation>
        <location evidence="2">Cytoplasm</location>
    </subcellularLocation>
</comment>
<comment type="similarity">
    <text evidence="3">Belongs to the Cu-Zn superoxide dismutase family.</text>
</comment>
<gene>
    <name type="primary">sod-1</name>
    <name type="synonym">sod1</name>
</gene>
<feature type="chain" id="PRO_0000164104" description="Superoxide dismutase [Cu-Zn]">
    <location>
        <begin position="1"/>
        <end position="158"/>
    </location>
</feature>
<feature type="binding site" evidence="1">
    <location>
        <position position="46"/>
    </location>
    <ligand>
        <name>Cu cation</name>
        <dbReference type="ChEBI" id="CHEBI:23378"/>
        <note>catalytic</note>
    </ligand>
</feature>
<feature type="binding site" evidence="1">
    <location>
        <position position="48"/>
    </location>
    <ligand>
        <name>Cu cation</name>
        <dbReference type="ChEBI" id="CHEBI:23378"/>
        <note>catalytic</note>
    </ligand>
</feature>
<feature type="binding site" evidence="1">
    <location>
        <position position="63"/>
    </location>
    <ligand>
        <name>Cu cation</name>
        <dbReference type="ChEBI" id="CHEBI:23378"/>
        <note>catalytic</note>
    </ligand>
</feature>
<feature type="binding site" evidence="1">
    <location>
        <position position="63"/>
    </location>
    <ligand>
        <name>Zn(2+)</name>
        <dbReference type="ChEBI" id="CHEBI:29105"/>
        <note>structural</note>
    </ligand>
</feature>
<feature type="binding site" evidence="1">
    <location>
        <position position="71"/>
    </location>
    <ligand>
        <name>Zn(2+)</name>
        <dbReference type="ChEBI" id="CHEBI:29105"/>
        <note>structural</note>
    </ligand>
</feature>
<feature type="binding site" evidence="1">
    <location>
        <position position="80"/>
    </location>
    <ligand>
        <name>Zn(2+)</name>
        <dbReference type="ChEBI" id="CHEBI:29105"/>
        <note>structural</note>
    </ligand>
</feature>
<feature type="binding site" evidence="1">
    <location>
        <position position="83"/>
    </location>
    <ligand>
        <name>Zn(2+)</name>
        <dbReference type="ChEBI" id="CHEBI:29105"/>
        <note>structural</note>
    </ligand>
</feature>
<feature type="binding site" evidence="1">
    <location>
        <position position="120"/>
    </location>
    <ligand>
        <name>Cu cation</name>
        <dbReference type="ChEBI" id="CHEBI:23378"/>
        <note>catalytic</note>
    </ligand>
</feature>
<feature type="disulfide bond" evidence="1">
    <location>
        <begin position="57"/>
        <end position="149"/>
    </location>
</feature>
<proteinExistence type="inferred from homology"/>
<accession>P24706</accession>
<organism>
    <name type="scientific">Onchocerca volvulus</name>
    <dbReference type="NCBI Taxonomy" id="6282"/>
    <lineage>
        <taxon>Eukaryota</taxon>
        <taxon>Metazoa</taxon>
        <taxon>Ecdysozoa</taxon>
        <taxon>Nematoda</taxon>
        <taxon>Chromadorea</taxon>
        <taxon>Rhabditida</taxon>
        <taxon>Spirurina</taxon>
        <taxon>Spiruromorpha</taxon>
        <taxon>Filarioidea</taxon>
        <taxon>Onchocercidae</taxon>
        <taxon>Onchocerca</taxon>
    </lineage>
</organism>
<sequence length="158" mass="16340">MSTNAIAVLRGDTVSGIIRFKQDKEGLPTTVTGEVKGLTPGLHGFHIHQYGDTTNGCISAGPHFNPYNKTHGDRTDEIRHVGDLGNIEAGADGTAHISISDQHIQLLGPNSIIGRSIVVHADQDDLGKGVGAKKDESLKTGNAGARVACGIVAIGAAS</sequence>
<evidence type="ECO:0000250" key="1"/>
<evidence type="ECO:0000269" key="2">
    <source>
    </source>
</evidence>
<evidence type="ECO:0000305" key="3"/>
<dbReference type="EC" id="1.15.1.1"/>
<dbReference type="EMBL" id="X57105">
    <property type="protein sequence ID" value="CAA40389.1"/>
    <property type="molecule type" value="Genomic_DNA"/>
</dbReference>
<dbReference type="EMBL" id="AF009621">
    <property type="protein sequence ID" value="AAB64226.1"/>
    <property type="molecule type" value="Genomic_DNA"/>
</dbReference>
<dbReference type="PIR" id="S18743">
    <property type="entry name" value="S18743"/>
</dbReference>
<dbReference type="SMR" id="P24706"/>
<dbReference type="STRING" id="6282.P24706"/>
<dbReference type="EnsemblMetazoa" id="OVOC11517.1">
    <property type="protein sequence ID" value="OVOC11517.1"/>
    <property type="gene ID" value="WBGene00248326"/>
</dbReference>
<dbReference type="HOGENOM" id="CLU_056632_4_2_1"/>
<dbReference type="OMA" id="IVAHEGC"/>
<dbReference type="Proteomes" id="UP000024404">
    <property type="component" value="Unassembled WGS sequence"/>
</dbReference>
<dbReference type="GO" id="GO:0005737">
    <property type="term" value="C:cytoplasm"/>
    <property type="evidence" value="ECO:0007669"/>
    <property type="project" value="UniProtKB-SubCell"/>
</dbReference>
<dbReference type="GO" id="GO:0005507">
    <property type="term" value="F:copper ion binding"/>
    <property type="evidence" value="ECO:0007669"/>
    <property type="project" value="InterPro"/>
</dbReference>
<dbReference type="GO" id="GO:0004784">
    <property type="term" value="F:superoxide dismutase activity"/>
    <property type="evidence" value="ECO:0007669"/>
    <property type="project" value="UniProtKB-EC"/>
</dbReference>
<dbReference type="CDD" id="cd00305">
    <property type="entry name" value="Cu-Zn_Superoxide_Dismutase"/>
    <property type="match status" value="1"/>
</dbReference>
<dbReference type="FunFam" id="2.60.40.200:FF:000001">
    <property type="entry name" value="Superoxide dismutase [Cu-Zn]"/>
    <property type="match status" value="1"/>
</dbReference>
<dbReference type="Gene3D" id="2.60.40.200">
    <property type="entry name" value="Superoxide dismutase, copper/zinc binding domain"/>
    <property type="match status" value="1"/>
</dbReference>
<dbReference type="InterPro" id="IPR036423">
    <property type="entry name" value="SOD-like_Cu/Zn_dom_sf"/>
</dbReference>
<dbReference type="InterPro" id="IPR024134">
    <property type="entry name" value="SOD_Cu/Zn_/chaperone"/>
</dbReference>
<dbReference type="InterPro" id="IPR018152">
    <property type="entry name" value="SOD_Cu/Zn_BS"/>
</dbReference>
<dbReference type="InterPro" id="IPR001424">
    <property type="entry name" value="SOD_Cu_Zn_dom"/>
</dbReference>
<dbReference type="PANTHER" id="PTHR10003">
    <property type="entry name" value="SUPEROXIDE DISMUTASE CU-ZN -RELATED"/>
    <property type="match status" value="1"/>
</dbReference>
<dbReference type="Pfam" id="PF00080">
    <property type="entry name" value="Sod_Cu"/>
    <property type="match status" value="1"/>
</dbReference>
<dbReference type="PRINTS" id="PR00068">
    <property type="entry name" value="CUZNDISMTASE"/>
</dbReference>
<dbReference type="SUPFAM" id="SSF49329">
    <property type="entry name" value="Cu,Zn superoxide dismutase-like"/>
    <property type="match status" value="1"/>
</dbReference>
<dbReference type="PROSITE" id="PS00087">
    <property type="entry name" value="SOD_CU_ZN_1"/>
    <property type="match status" value="1"/>
</dbReference>
<dbReference type="PROSITE" id="PS00332">
    <property type="entry name" value="SOD_CU_ZN_2"/>
    <property type="match status" value="1"/>
</dbReference>
<keyword id="KW-0049">Antioxidant</keyword>
<keyword id="KW-0186">Copper</keyword>
<keyword id="KW-0963">Cytoplasm</keyword>
<keyword id="KW-1015">Disulfide bond</keyword>
<keyword id="KW-0479">Metal-binding</keyword>
<keyword id="KW-0560">Oxidoreductase</keyword>
<keyword id="KW-1185">Reference proteome</keyword>
<keyword id="KW-0862">Zinc</keyword>
<protein>
    <recommendedName>
        <fullName>Superoxide dismutase [Cu-Zn]</fullName>
        <ecNumber>1.15.1.1</ecNumber>
    </recommendedName>
</protein>
<reference key="1">
    <citation type="journal article" date="1991" name="Infect. Immun.">
        <title>Characterization and molecular cloning of a Cu/Zn superoxide dismutase from the human parasite Onchocerca volvulus.</title>
        <authorList>
            <person name="Henkle K.J."/>
            <person name="Liebau E."/>
            <person name="Mueller S."/>
            <person name="Bergmann B."/>
            <person name="Walter R.D."/>
        </authorList>
    </citation>
    <scope>NUCLEOTIDE SEQUENCE [GENOMIC DNA]</scope>
</reference>
<reference key="2">
    <citation type="journal article" date="1997" name="Mol. Biochem. Parasitol.">
        <title>Localization and functional analysis of the cytosolic and extracellular CuZn superoxide dismutases in the human parasitic nematode Onchocerca volvulus.</title>
        <authorList>
            <person name="Henkle-Duehrsen K."/>
            <person name="Tuan R.S."/>
            <person name="Wildenburg G."/>
            <person name="Eschbach M.-L."/>
            <person name="Tawe W."/>
            <person name="Zipfel P."/>
            <person name="Walter R.D."/>
        </authorList>
    </citation>
    <scope>NUCLEOTIDE SEQUENCE [GENOMIC DNA]</scope>
    <scope>SUBCELLULAR LOCATION</scope>
</reference>
<name>SODC_ONCVO</name>